<dbReference type="EMBL" id="U14003">
    <property type="protein sequence ID" value="AAA97162.1"/>
    <property type="molecule type" value="Genomic_DNA"/>
</dbReference>
<dbReference type="EMBL" id="U00096">
    <property type="protein sequence ID" value="AAC77222.1"/>
    <property type="molecule type" value="Genomic_DNA"/>
</dbReference>
<dbReference type="EMBL" id="AP009048">
    <property type="protein sequence ID" value="BAE78262.1"/>
    <property type="molecule type" value="Genomic_DNA"/>
</dbReference>
<dbReference type="PIR" id="S56491">
    <property type="entry name" value="S56491"/>
</dbReference>
<dbReference type="RefSeq" id="NP_418686.1">
    <property type="nucleotide sequence ID" value="NC_000913.3"/>
</dbReference>
<dbReference type="RefSeq" id="WP_001128335.1">
    <property type="nucleotide sequence ID" value="NZ_LN832404.1"/>
</dbReference>
<dbReference type="BioGRID" id="4262729">
    <property type="interactions" value="6"/>
</dbReference>
<dbReference type="DIP" id="DIP-10014N"/>
<dbReference type="FunCoup" id="P39344">
    <property type="interactions" value="612"/>
</dbReference>
<dbReference type="IntAct" id="P39344">
    <property type="interactions" value="1"/>
</dbReference>
<dbReference type="STRING" id="511145.b4265"/>
<dbReference type="REBASE" id="952221">
    <property type="entry name" value="M.EcoKORF4265P"/>
</dbReference>
<dbReference type="TCDB" id="2.A.8.1.2">
    <property type="family name" value="the gluconate:h(+) symporter (gntp) family"/>
</dbReference>
<dbReference type="PaxDb" id="511145-b4265"/>
<dbReference type="DNASU" id="948798"/>
<dbReference type="EnsemblBacteria" id="AAC77222">
    <property type="protein sequence ID" value="AAC77222"/>
    <property type="gene ID" value="b4265"/>
</dbReference>
<dbReference type="GeneID" id="948798"/>
<dbReference type="KEGG" id="ecj:JW4222"/>
<dbReference type="KEGG" id="eco:b4265"/>
<dbReference type="KEGG" id="ecoc:C3026_23005"/>
<dbReference type="PATRIC" id="fig|1411691.4.peg.2438"/>
<dbReference type="EchoBASE" id="EB2428"/>
<dbReference type="eggNOG" id="COG2610">
    <property type="taxonomic scope" value="Bacteria"/>
</dbReference>
<dbReference type="HOGENOM" id="CLU_027949_0_0_6"/>
<dbReference type="InParanoid" id="P39344"/>
<dbReference type="OMA" id="DVIGHMA"/>
<dbReference type="OrthoDB" id="9787129at2"/>
<dbReference type="PhylomeDB" id="P39344"/>
<dbReference type="BioCyc" id="EcoCyc:YJGT-MONOMER"/>
<dbReference type="BioCyc" id="MetaCyc:YJGT-MONOMER"/>
<dbReference type="UniPathway" id="UPA00793"/>
<dbReference type="PRO" id="PR:P39344"/>
<dbReference type="Proteomes" id="UP000000625">
    <property type="component" value="Chromosome"/>
</dbReference>
<dbReference type="GO" id="GO:0005886">
    <property type="term" value="C:plasma membrane"/>
    <property type="evidence" value="ECO:0000314"/>
    <property type="project" value="EcoCyc"/>
</dbReference>
<dbReference type="GO" id="GO:0015128">
    <property type="term" value="F:gluconate transmembrane transporter activity"/>
    <property type="evidence" value="ECO:0000315"/>
    <property type="project" value="EcoCyc"/>
</dbReference>
<dbReference type="GO" id="GO:0015568">
    <property type="term" value="F:L-idonate transmembrane transporter activity"/>
    <property type="evidence" value="ECO:0000314"/>
    <property type="project" value="EcoCyc"/>
</dbReference>
<dbReference type="GO" id="GO:0008643">
    <property type="term" value="P:carbohydrate transport"/>
    <property type="evidence" value="ECO:0000314"/>
    <property type="project" value="EcoCyc"/>
</dbReference>
<dbReference type="GO" id="GO:0019521">
    <property type="term" value="P:D-gluconate metabolic process"/>
    <property type="evidence" value="ECO:0007669"/>
    <property type="project" value="UniProtKB-KW"/>
</dbReference>
<dbReference type="GO" id="GO:0035429">
    <property type="term" value="P:gluconate transmembrane transport"/>
    <property type="evidence" value="ECO:0000318"/>
    <property type="project" value="GO_Central"/>
</dbReference>
<dbReference type="GO" id="GO:0046183">
    <property type="term" value="P:L-idonate catabolic process"/>
    <property type="evidence" value="ECO:0007669"/>
    <property type="project" value="UniProtKB-UniPathway"/>
</dbReference>
<dbReference type="GO" id="GO:0015726">
    <property type="term" value="P:L-idonate transmembrane transport"/>
    <property type="evidence" value="ECO:0000314"/>
    <property type="project" value="EcoCyc"/>
</dbReference>
<dbReference type="InterPro" id="IPR003474">
    <property type="entry name" value="Glcn_transporter"/>
</dbReference>
<dbReference type="NCBIfam" id="TIGR00791">
    <property type="entry name" value="gntP"/>
    <property type="match status" value="1"/>
</dbReference>
<dbReference type="PANTHER" id="PTHR30354">
    <property type="entry name" value="GNT FAMILY GLUCONATE TRANSPORTER"/>
    <property type="match status" value="1"/>
</dbReference>
<dbReference type="PANTHER" id="PTHR30354:SF9">
    <property type="entry name" value="GNT-II SYSTEM L-IDONATE TRANSPORTER"/>
    <property type="match status" value="1"/>
</dbReference>
<dbReference type="Pfam" id="PF02447">
    <property type="entry name" value="GntP_permease"/>
    <property type="match status" value="1"/>
</dbReference>
<dbReference type="PIRSF" id="PIRSF002746">
    <property type="entry name" value="Gluconate_transporter"/>
    <property type="match status" value="1"/>
</dbReference>
<sequence>MPLIIIAAGVALLLILMIGFKVNGFIALVLVAAVVGFAEGMDAQAVLHSIQNGIGSTLGGLAMILGFGAMLGKLISDTGAAQRIATTLIATFGKKRVQWALVITGLVVGLAMFFEVGFVLLLPLVFTIVASSGLPLLYVGVPMVAALSVTHCFLPPHPGPTAIATIFEANLGTTLLYGFIITIPTVIVAGPLFSKLLTRFEKAPPEGLFNPHLFSEEEMPSFWNSIFAAVIPVILMAIAAVCEITLPKTNTVRLFFEFVGNPAVALFIAIVIAIFTLGRRNGRTIEQIMDIIGDSIGAIAMIVFIIAGGGAFKQVLVDSGVGHYISHLMTGTTLSPLLMCWTVAALLRIALGSATVAAITTAGVVLPIINVTHADPALMVLATGAGSVIASHVNDPGFWLFKGYFNLTVGETLRTWTVMETLISIMGLLGVLAINAVLH</sequence>
<feature type="chain" id="PRO_0000061940" description="Gnt-II system L-idonate transporter">
    <location>
        <begin position="1"/>
        <end position="439"/>
    </location>
</feature>
<feature type="topological domain" description="Periplasmic" evidence="9">
    <location>
        <begin position="1"/>
        <end position="11"/>
    </location>
</feature>
<feature type="transmembrane region" description="Helical" evidence="1">
    <location>
        <begin position="12"/>
        <end position="34"/>
    </location>
</feature>
<feature type="topological domain" description="Cytoplasmic" evidence="9">
    <location>
        <begin position="35"/>
        <end position="53"/>
    </location>
</feature>
<feature type="transmembrane region" description="Helical" evidence="1">
    <location>
        <begin position="54"/>
        <end position="76"/>
    </location>
</feature>
<feature type="topological domain" description="Periplasmic" evidence="9">
    <location>
        <begin position="77"/>
        <end position="96"/>
    </location>
</feature>
<feature type="transmembrane region" description="Helical" evidence="1">
    <location>
        <begin position="97"/>
        <end position="114"/>
    </location>
</feature>
<feature type="topological domain" description="Cytoplasmic" evidence="9">
    <location>
        <begin position="115"/>
        <end position="118"/>
    </location>
</feature>
<feature type="transmembrane region" description="Helical" evidence="1">
    <location>
        <begin position="119"/>
        <end position="141"/>
    </location>
</feature>
<feature type="topological domain" description="Periplasmic" evidence="9">
    <location>
        <begin position="142"/>
        <end position="170"/>
    </location>
</feature>
<feature type="transmembrane region" description="Helical" evidence="1">
    <location>
        <begin position="171"/>
        <end position="193"/>
    </location>
</feature>
<feature type="topological domain" description="Cytoplasmic" evidence="9">
    <location>
        <begin position="194"/>
        <end position="218"/>
    </location>
</feature>
<feature type="transmembrane region" description="Helical" evidence="1">
    <location>
        <begin position="219"/>
        <end position="241"/>
    </location>
</feature>
<feature type="topological domain" description="Periplasmic" evidence="9">
    <location>
        <begin position="242"/>
        <end position="253"/>
    </location>
</feature>
<feature type="transmembrane region" description="Helical" evidence="1">
    <location>
        <begin position="254"/>
        <end position="276"/>
    </location>
</feature>
<feature type="topological domain" description="Cytoplasmic" evidence="9">
    <location>
        <begin position="277"/>
        <end position="290"/>
    </location>
</feature>
<feature type="transmembrane region" description="Helical" evidence="1">
    <location>
        <begin position="291"/>
        <end position="310"/>
    </location>
</feature>
<feature type="topological domain" description="Periplasmic" evidence="9">
    <location>
        <begin position="311"/>
        <end position="322"/>
    </location>
</feature>
<feature type="transmembrane region" description="Helical" evidence="1">
    <location>
        <begin position="323"/>
        <end position="345"/>
    </location>
</feature>
<feature type="topological domain" description="Cytoplasmic" evidence="9">
    <location>
        <begin position="346"/>
        <end position="348"/>
    </location>
</feature>
<feature type="transmembrane region" description="Helical" evidence="1">
    <location>
        <begin position="349"/>
        <end position="371"/>
    </location>
</feature>
<feature type="topological domain" description="Periplasmic" evidence="9">
    <location>
        <begin position="372"/>
        <end position="377"/>
    </location>
</feature>
<feature type="transmembrane region" description="Helical" evidence="1">
    <location>
        <begin position="378"/>
        <end position="400"/>
    </location>
</feature>
<feature type="topological domain" description="Cytoplasmic" evidence="9">
    <location>
        <begin position="401"/>
        <end position="414"/>
    </location>
</feature>
<feature type="transmembrane region" description="Helical" evidence="1">
    <location>
        <begin position="415"/>
        <end position="437"/>
    </location>
</feature>
<feature type="topological domain" description="Periplasmic" evidence="2">
    <location>
        <begin position="438"/>
        <end position="439"/>
    </location>
</feature>
<name>IDNT_ECOLI</name>
<organism>
    <name type="scientific">Escherichia coli (strain K12)</name>
    <dbReference type="NCBI Taxonomy" id="83333"/>
    <lineage>
        <taxon>Bacteria</taxon>
        <taxon>Pseudomonadati</taxon>
        <taxon>Pseudomonadota</taxon>
        <taxon>Gammaproteobacteria</taxon>
        <taxon>Enterobacterales</taxon>
        <taxon>Enterobacteriaceae</taxon>
        <taxon>Escherichia</taxon>
    </lineage>
</organism>
<protein>
    <recommendedName>
        <fullName evidence="9">Gnt-II system L-idonate transporter</fullName>
        <shortName>L-Ido transporter</shortName>
        <shortName evidence="8">L-idonate transporter</shortName>
    </recommendedName>
    <alternativeName>
        <fullName>5-keto-D-gluconate transporter</fullName>
    </alternativeName>
    <alternativeName>
        <fullName evidence="9">L-idonate/5-ketogluconate/gluconate transporter</fullName>
    </alternativeName>
</protein>
<keyword id="KW-0997">Cell inner membrane</keyword>
<keyword id="KW-1003">Cell membrane</keyword>
<keyword id="KW-0311">Gluconate utilization</keyword>
<keyword id="KW-0472">Membrane</keyword>
<keyword id="KW-1185">Reference proteome</keyword>
<keyword id="KW-0762">Sugar transport</keyword>
<keyword id="KW-0812">Transmembrane</keyword>
<keyword id="KW-1133">Transmembrane helix</keyword>
<keyword id="KW-0813">Transport</keyword>
<evidence type="ECO:0000255" key="1"/>
<evidence type="ECO:0000269" key="2">
    <source>
    </source>
</evidence>
<evidence type="ECO:0000269" key="3">
    <source>
    </source>
</evidence>
<evidence type="ECO:0000269" key="4">
    <source>
    </source>
</evidence>
<evidence type="ECO:0000269" key="5">
    <source>
    </source>
</evidence>
<evidence type="ECO:0000269" key="6">
    <source>
    </source>
</evidence>
<evidence type="ECO:0000303" key="7">
    <source>
    </source>
</evidence>
<evidence type="ECO:0000303" key="8">
    <source>
    </source>
</evidence>
<evidence type="ECO:0000305" key="9"/>
<evidence type="ECO:0000305" key="10">
    <source>
    </source>
</evidence>
<evidence type="ECO:0000305" key="11">
    <source>
    </source>
</evidence>
<evidence type="ECO:0000305" key="12">
    <source>
    </source>
</evidence>
<evidence type="ECO:0000305" key="13">
    <source>
    </source>
</evidence>
<reference key="1">
    <citation type="journal article" date="1995" name="Nucleic Acids Res.">
        <title>Analysis of the Escherichia coli genome VI: DNA sequence of the region from 92.8 through 100 minutes.</title>
        <authorList>
            <person name="Burland V.D."/>
            <person name="Plunkett G. III"/>
            <person name="Sofia H.J."/>
            <person name="Daniels D.L."/>
            <person name="Blattner F.R."/>
        </authorList>
    </citation>
    <scope>NUCLEOTIDE SEQUENCE [LARGE SCALE GENOMIC DNA]</scope>
    <source>
        <strain>K12 / MG1655 / ATCC 47076</strain>
    </source>
</reference>
<reference key="2">
    <citation type="journal article" date="1997" name="Science">
        <title>The complete genome sequence of Escherichia coli K-12.</title>
        <authorList>
            <person name="Blattner F.R."/>
            <person name="Plunkett G. III"/>
            <person name="Bloch C.A."/>
            <person name="Perna N.T."/>
            <person name="Burland V."/>
            <person name="Riley M."/>
            <person name="Collado-Vides J."/>
            <person name="Glasner J.D."/>
            <person name="Rode C.K."/>
            <person name="Mayhew G.F."/>
            <person name="Gregor J."/>
            <person name="Davis N.W."/>
            <person name="Kirkpatrick H.A."/>
            <person name="Goeden M.A."/>
            <person name="Rose D.J."/>
            <person name="Mau B."/>
            <person name="Shao Y."/>
        </authorList>
    </citation>
    <scope>NUCLEOTIDE SEQUENCE [LARGE SCALE GENOMIC DNA]</scope>
    <source>
        <strain>K12 / MG1655 / ATCC 47076</strain>
    </source>
</reference>
<reference key="3">
    <citation type="journal article" date="2006" name="Mol. Syst. Biol.">
        <title>Highly accurate genome sequences of Escherichia coli K-12 strains MG1655 and W3110.</title>
        <authorList>
            <person name="Hayashi K."/>
            <person name="Morooka N."/>
            <person name="Yamamoto Y."/>
            <person name="Fujita K."/>
            <person name="Isono K."/>
            <person name="Choi S."/>
            <person name="Ohtsubo E."/>
            <person name="Baba T."/>
            <person name="Wanner B.L."/>
            <person name="Mori H."/>
            <person name="Horiuchi T."/>
        </authorList>
    </citation>
    <scope>NUCLEOTIDE SEQUENCE [LARGE SCALE GENOMIC DNA]</scope>
    <source>
        <strain>K12 / W3110 / ATCC 27325 / DSM 5911</strain>
    </source>
</reference>
<reference key="4">
    <citation type="journal article" date="1973" name="FEBS Lett.">
        <title>The mechanism of maintenance of electroneutrality during the transport of gluconate by E. coli.</title>
        <authorList>
            <person name="Robin A."/>
            <person name="Kepes A."/>
        </authorList>
    </citation>
    <scope>FUNCTION</scope>
</reference>
<reference key="5">
    <citation type="journal article" date="1997" name="FEMS Microbiol. Lett.">
        <title>Characterization of a novel transporter family that includes multiple Escherichia coli gluconate transporters and their homologues.</title>
        <authorList>
            <person name="Peekhaus N."/>
            <person name="Tong S."/>
            <person name="Reizer J."/>
            <person name="Saier M.H. Jr."/>
            <person name="Murray E."/>
            <person name="Conway T."/>
        </authorList>
    </citation>
    <scope>FUNCTION AS A GLUCONATE TRANSPORTER</scope>
    <scope>BIOPHYSICOCHEMICAL PROPERTIES</scope>
</reference>
<reference key="6">
    <citation type="journal article" date="1998" name="J. Bacteriol.">
        <title>Sequence analysis of the GntII (subsidiary) system for gluconate metabolism reveals a novel pathway for L-idonic acid catabolism in Escherichia coli.</title>
        <authorList>
            <person name="Bausch C."/>
            <person name="Peekhaus N."/>
            <person name="Utz C."/>
            <person name="Blais T."/>
            <person name="Murray E."/>
            <person name="Lowary T."/>
            <person name="Conway T."/>
        </authorList>
    </citation>
    <scope>FUNCTION</scope>
</reference>
<reference key="7">
    <citation type="journal article" date="2005" name="Science">
        <title>Global topology analysis of the Escherichia coli inner membrane proteome.</title>
        <authorList>
            <person name="Daley D.O."/>
            <person name="Rapp M."/>
            <person name="Granseth E."/>
            <person name="Melen K."/>
            <person name="Drew D."/>
            <person name="von Heijne G."/>
        </authorList>
    </citation>
    <scope>TOPOLOGY [LARGE SCALE ANALYSIS]</scope>
    <scope>SUBCELLULAR LOCATION</scope>
    <source>
        <strain>K12 / MG1655 / ATCC 47076</strain>
    </source>
</reference>
<reference key="8">
    <citation type="journal article" date="2006" name="Proc. Natl. Acad. Sci. U.S.A.">
        <title>Systems approach to refining genome annotation.</title>
        <authorList>
            <person name="Reed J.L."/>
            <person name="Patel T.R."/>
            <person name="Chen K.H."/>
            <person name="Joyce A.R."/>
            <person name="Applebee M.K."/>
            <person name="Herring C.D."/>
            <person name="Bui O.T."/>
            <person name="Knight E.M."/>
            <person name="Fong S.S."/>
            <person name="Palsson B.O."/>
        </authorList>
    </citation>
    <scope>FUNCTION AS A 5-KETO-D-GLUCONATE TRANSPORTER</scope>
    <scope>ROLE IN 5-KETO-D-GLUCONATE UTILIZATION</scope>
    <scope>DISRUPTION PHENOTYPE</scope>
    <scope>INDUCTION</scope>
</reference>
<comment type="function">
    <text evidence="3 4 5 6">Transporter which is probably involved in L-idonate metabolism (PubMed:9658018). Transports L-idonate from the periplasm across the inner membrane (PubMed:9658018). Can also transport D-gluconate and 5-keto-D-gluconate (PubMed:17088549, PubMed:9119199). It has been reported that gluconate uptake probably occurs via a proton-symport mechanism in E.coli (PubMed:4585187).</text>
</comment>
<comment type="catalytic activity">
    <reaction evidence="13">
        <text>L-idonate(in) + H(+)(in) = L-idonate(out) + H(+)(out)</text>
        <dbReference type="Rhea" id="RHEA:29571"/>
        <dbReference type="ChEBI" id="CHEBI:15378"/>
        <dbReference type="ChEBI" id="CHEBI:17796"/>
    </reaction>
</comment>
<comment type="catalytic activity">
    <reaction evidence="11 12">
        <text>D-gluconate(in) + H(+)(in) = D-gluconate(out) + H(+)(out)</text>
        <dbReference type="Rhea" id="RHEA:28831"/>
        <dbReference type="ChEBI" id="CHEBI:15378"/>
        <dbReference type="ChEBI" id="CHEBI:18391"/>
    </reaction>
</comment>
<comment type="catalytic activity">
    <reaction evidence="10">
        <text>5-dehydro-D-gluconate(in) + H(+)(in) = 5-dehydro-D-gluconate(out) + H(+)(out)</text>
        <dbReference type="Rhea" id="RHEA:28819"/>
        <dbReference type="ChEBI" id="CHEBI:15378"/>
        <dbReference type="ChEBI" id="CHEBI:58143"/>
    </reaction>
</comment>
<comment type="biophysicochemical properties">
    <kinetics>
        <KM evidence="5">60 uM for gluconate</KM>
        <Vmax evidence="5">26.0 nmol/min/mg enzyme with gluconate as substrate</Vmax>
    </kinetics>
</comment>
<comment type="pathway">
    <text evidence="13">Carbohydrate acid metabolism; L-idonate degradation.</text>
</comment>
<comment type="subcellular location">
    <subcellularLocation>
        <location evidence="2">Cell inner membrane</location>
        <topology evidence="1">Multi-pass membrane protein</topology>
    </subcellularLocation>
</comment>
<comment type="induction">
    <text evidence="3 6">The gene is located in the idnDOTR operon, which is involved in L-idonate metabolism (PubMed:9658018). Up-regulated by 5-keto-D-gluconate (PubMed:17088549).</text>
</comment>
<comment type="disruption phenotype">
    <text evidence="3">Reduced growth rate when grown on 5-keto-D-gluconate as sole carbon source.</text>
</comment>
<comment type="similarity">
    <text evidence="9">Belongs to the GntP permease family.</text>
</comment>
<proteinExistence type="evidence at protein level"/>
<accession>P39344</accession>
<accession>Q2M644</accession>
<gene>
    <name evidence="8" type="primary">idnT</name>
    <name evidence="7" type="synonym">gntW</name>
    <name type="synonym">yjgT</name>
    <name type="ordered locus">b4265</name>
    <name type="ordered locus">JW4222</name>
</gene>